<organism>
    <name type="scientific">Schizosaccharomyces pombe (strain 972 / ATCC 24843)</name>
    <name type="common">Fission yeast</name>
    <dbReference type="NCBI Taxonomy" id="284812"/>
    <lineage>
        <taxon>Eukaryota</taxon>
        <taxon>Fungi</taxon>
        <taxon>Dikarya</taxon>
        <taxon>Ascomycota</taxon>
        <taxon>Taphrinomycotina</taxon>
        <taxon>Schizosaccharomycetes</taxon>
        <taxon>Schizosaccharomycetales</taxon>
        <taxon>Schizosaccharomycetaceae</taxon>
        <taxon>Schizosaccharomyces</taxon>
    </lineage>
</organism>
<protein>
    <recommendedName>
        <fullName>RNA-binding protein vts1</fullName>
    </recommendedName>
</protein>
<reference key="1">
    <citation type="journal article" date="2002" name="Nature">
        <title>The genome sequence of Schizosaccharomyces pombe.</title>
        <authorList>
            <person name="Wood V."/>
            <person name="Gwilliam R."/>
            <person name="Rajandream M.A."/>
            <person name="Lyne M.H."/>
            <person name="Lyne R."/>
            <person name="Stewart A."/>
            <person name="Sgouros J.G."/>
            <person name="Peat N."/>
            <person name="Hayles J."/>
            <person name="Baker S.G."/>
            <person name="Basham D."/>
            <person name="Bowman S."/>
            <person name="Brooks K."/>
            <person name="Brown D."/>
            <person name="Brown S."/>
            <person name="Chillingworth T."/>
            <person name="Churcher C.M."/>
            <person name="Collins M."/>
            <person name="Connor R."/>
            <person name="Cronin A."/>
            <person name="Davis P."/>
            <person name="Feltwell T."/>
            <person name="Fraser A."/>
            <person name="Gentles S."/>
            <person name="Goble A."/>
            <person name="Hamlin N."/>
            <person name="Harris D.E."/>
            <person name="Hidalgo J."/>
            <person name="Hodgson G."/>
            <person name="Holroyd S."/>
            <person name="Hornsby T."/>
            <person name="Howarth S."/>
            <person name="Huckle E.J."/>
            <person name="Hunt S."/>
            <person name="Jagels K."/>
            <person name="James K.D."/>
            <person name="Jones L."/>
            <person name="Jones M."/>
            <person name="Leather S."/>
            <person name="McDonald S."/>
            <person name="McLean J."/>
            <person name="Mooney P."/>
            <person name="Moule S."/>
            <person name="Mungall K.L."/>
            <person name="Murphy L.D."/>
            <person name="Niblett D."/>
            <person name="Odell C."/>
            <person name="Oliver K."/>
            <person name="O'Neil S."/>
            <person name="Pearson D."/>
            <person name="Quail M.A."/>
            <person name="Rabbinowitsch E."/>
            <person name="Rutherford K.M."/>
            <person name="Rutter S."/>
            <person name="Saunders D."/>
            <person name="Seeger K."/>
            <person name="Sharp S."/>
            <person name="Skelton J."/>
            <person name="Simmonds M.N."/>
            <person name="Squares R."/>
            <person name="Squares S."/>
            <person name="Stevens K."/>
            <person name="Taylor K."/>
            <person name="Taylor R.G."/>
            <person name="Tivey A."/>
            <person name="Walsh S.V."/>
            <person name="Warren T."/>
            <person name="Whitehead S."/>
            <person name="Woodward J.R."/>
            <person name="Volckaert G."/>
            <person name="Aert R."/>
            <person name="Robben J."/>
            <person name="Grymonprez B."/>
            <person name="Weltjens I."/>
            <person name="Vanstreels E."/>
            <person name="Rieger M."/>
            <person name="Schaefer M."/>
            <person name="Mueller-Auer S."/>
            <person name="Gabel C."/>
            <person name="Fuchs M."/>
            <person name="Duesterhoeft A."/>
            <person name="Fritzc C."/>
            <person name="Holzer E."/>
            <person name="Moestl D."/>
            <person name="Hilbert H."/>
            <person name="Borzym K."/>
            <person name="Langer I."/>
            <person name="Beck A."/>
            <person name="Lehrach H."/>
            <person name="Reinhardt R."/>
            <person name="Pohl T.M."/>
            <person name="Eger P."/>
            <person name="Zimmermann W."/>
            <person name="Wedler H."/>
            <person name="Wambutt R."/>
            <person name="Purnelle B."/>
            <person name="Goffeau A."/>
            <person name="Cadieu E."/>
            <person name="Dreano S."/>
            <person name="Gloux S."/>
            <person name="Lelaure V."/>
            <person name="Mottier S."/>
            <person name="Galibert F."/>
            <person name="Aves S.J."/>
            <person name="Xiang Z."/>
            <person name="Hunt C."/>
            <person name="Moore K."/>
            <person name="Hurst S.M."/>
            <person name="Lucas M."/>
            <person name="Rochet M."/>
            <person name="Gaillardin C."/>
            <person name="Tallada V.A."/>
            <person name="Garzon A."/>
            <person name="Thode G."/>
            <person name="Daga R.R."/>
            <person name="Cruzado L."/>
            <person name="Jimenez J."/>
            <person name="Sanchez M."/>
            <person name="del Rey F."/>
            <person name="Benito J."/>
            <person name="Dominguez A."/>
            <person name="Revuelta J.L."/>
            <person name="Moreno S."/>
            <person name="Armstrong J."/>
            <person name="Forsburg S.L."/>
            <person name="Cerutti L."/>
            <person name="Lowe T."/>
            <person name="McCombie W.R."/>
            <person name="Paulsen I."/>
            <person name="Potashkin J."/>
            <person name="Shpakovski G.V."/>
            <person name="Ussery D."/>
            <person name="Barrell B.G."/>
            <person name="Nurse P."/>
        </authorList>
    </citation>
    <scope>NUCLEOTIDE SEQUENCE [LARGE SCALE GENOMIC DNA]</scope>
    <source>
        <strain>972 / ATCC 24843</strain>
    </source>
</reference>
<reference key="2">
    <citation type="journal article" date="2008" name="J. Proteome Res.">
        <title>Phosphoproteome analysis of fission yeast.</title>
        <authorList>
            <person name="Wilson-Grady J.T."/>
            <person name="Villen J."/>
            <person name="Gygi S.P."/>
        </authorList>
    </citation>
    <scope>PHOSPHORYLATION [LARGE SCALE ANALYSIS] AT SER-673</scope>
    <scope>IDENTIFICATION BY MASS SPECTROMETRY</scope>
</reference>
<dbReference type="EMBL" id="CU329671">
    <property type="protein sequence ID" value="CAB89878.1"/>
    <property type="molecule type" value="Genomic_DNA"/>
</dbReference>
<dbReference type="SMR" id="Q9P6R7"/>
<dbReference type="BioGRID" id="276696">
    <property type="interactions" value="64"/>
</dbReference>
<dbReference type="FunCoup" id="Q9P6R7">
    <property type="interactions" value="10"/>
</dbReference>
<dbReference type="STRING" id="284812.Q9P6R7"/>
<dbReference type="iPTMnet" id="Q9P6R7"/>
<dbReference type="PaxDb" id="4896-SPBC13E7.03c.1"/>
<dbReference type="EnsemblFungi" id="SPBC13E7.03c.1">
    <property type="protein sequence ID" value="SPBC13E7.03c.1:pep"/>
    <property type="gene ID" value="SPBC13E7.03c"/>
</dbReference>
<dbReference type="KEGG" id="spo:2540161"/>
<dbReference type="PomBase" id="SPBC13E7.03c"/>
<dbReference type="VEuPathDB" id="FungiDB:SPBC13E7.03c"/>
<dbReference type="eggNOG" id="KOG3791">
    <property type="taxonomic scope" value="Eukaryota"/>
</dbReference>
<dbReference type="HOGENOM" id="CLU_383178_0_0_1"/>
<dbReference type="InParanoid" id="Q9P6R7"/>
<dbReference type="OMA" id="NIWDSHD"/>
<dbReference type="PRO" id="PR:Q9P6R7"/>
<dbReference type="Proteomes" id="UP000002485">
    <property type="component" value="Chromosome II"/>
</dbReference>
<dbReference type="GO" id="GO:0005829">
    <property type="term" value="C:cytosol"/>
    <property type="evidence" value="ECO:0007005"/>
    <property type="project" value="PomBase"/>
</dbReference>
<dbReference type="GO" id="GO:0000932">
    <property type="term" value="C:P-body"/>
    <property type="evidence" value="ECO:0000318"/>
    <property type="project" value="GO_Central"/>
</dbReference>
<dbReference type="GO" id="GO:0003729">
    <property type="term" value="F:mRNA binding"/>
    <property type="evidence" value="ECO:0000318"/>
    <property type="project" value="GO_Central"/>
</dbReference>
<dbReference type="GO" id="GO:0000166">
    <property type="term" value="F:nucleotide binding"/>
    <property type="evidence" value="ECO:0007669"/>
    <property type="project" value="UniProtKB-KW"/>
</dbReference>
<dbReference type="GO" id="GO:0000289">
    <property type="term" value="P:nuclear-transcribed mRNA poly(A) tail shortening"/>
    <property type="evidence" value="ECO:0000318"/>
    <property type="project" value="GO_Central"/>
</dbReference>
<dbReference type="GO" id="GO:0015031">
    <property type="term" value="P:protein transport"/>
    <property type="evidence" value="ECO:0007669"/>
    <property type="project" value="UniProtKB-KW"/>
</dbReference>
<dbReference type="CDD" id="cd09556">
    <property type="entry name" value="SAM_VTS1_fungal"/>
    <property type="match status" value="1"/>
</dbReference>
<dbReference type="Gene3D" id="1.10.150.50">
    <property type="entry name" value="Transcription Factor, Ets-1"/>
    <property type="match status" value="1"/>
</dbReference>
<dbReference type="InterPro" id="IPR001660">
    <property type="entry name" value="SAM"/>
</dbReference>
<dbReference type="InterPro" id="IPR013761">
    <property type="entry name" value="SAM/pointed_sf"/>
</dbReference>
<dbReference type="InterPro" id="IPR050897">
    <property type="entry name" value="SMAUG/VTS1_RNA-bind"/>
</dbReference>
<dbReference type="InterPro" id="IPR037635">
    <property type="entry name" value="VTS1_SAM"/>
</dbReference>
<dbReference type="PANTHER" id="PTHR12515:SF5">
    <property type="entry name" value="PROTEIN SMAUG"/>
    <property type="match status" value="1"/>
</dbReference>
<dbReference type="PANTHER" id="PTHR12515">
    <property type="entry name" value="STERILE ALPHA MOTIF DOMAIN CONTAINING PROTEIN 4-RELATED"/>
    <property type="match status" value="1"/>
</dbReference>
<dbReference type="Pfam" id="PF07647">
    <property type="entry name" value="SAM_2"/>
    <property type="match status" value="1"/>
</dbReference>
<dbReference type="SMART" id="SM00454">
    <property type="entry name" value="SAM"/>
    <property type="match status" value="1"/>
</dbReference>
<dbReference type="SUPFAM" id="SSF47769">
    <property type="entry name" value="SAM/Pointed domain"/>
    <property type="match status" value="1"/>
</dbReference>
<dbReference type="PROSITE" id="PS50105">
    <property type="entry name" value="SAM_DOMAIN"/>
    <property type="match status" value="1"/>
</dbReference>
<comment type="function">
    <text evidence="2">RNA-binding protein involved in post-transcriptional regulation through transcript degradation.</text>
</comment>
<comment type="subunit">
    <text evidence="2">Monomer. Binds to RNA.</text>
</comment>
<comment type="subcellular location">
    <subcellularLocation>
        <location evidence="2">Cytoplasm</location>
        <location evidence="2">Cytosol</location>
    </subcellularLocation>
    <subcellularLocation>
        <location evidence="1">Cytoplasm</location>
        <location evidence="1">P-body</location>
    </subcellularLocation>
</comment>
<comment type="similarity">
    <text evidence="6">Belongs to the VTS1 family.</text>
</comment>
<sequence>MEVVEGRRKTCLDVVDSPSSRQKQTIAVSLVDGKNYPTRFLNSRTIDKLKQELNTSNLSTGEMSTNETLKNAQEVAGKLLSEENEDSISEHFDEYLGADKPGISFLTRLKTLESWFQSLSLQDRLTTLRTLLHHLPSQEISTLLSSSLTSSPSNSGLSLDKSLPSSPKGDSPSLSSSLPSLTTKSNLSGNLNMVTPASTQGPAFSSKHGFSNALSTASPIPVRTSSVSSTYLTQDREASSKNCLSKALAFSSIEPPASSASTSPRNTPTPSNNGTSINANVTSSLTSNSTGKTSKTTDLLIAASKKSLPSNSTPSKPNTSFFETPHNNIWDSRDRGAFSAPPAPFFPLGFSPHLNDESSRSRWSNISYSPPPPPPPPELLNHSPKSRPLGDKPYLFYRNNQIGPRTRTEGRSSITEGKPFLSSSLRFEHVPSANDLNSVVNARVEKSTGQPSTPLNRQHYFNELPHSTTPVTLPSLIHGSEIDRRRSGFCLNNFNSTPPFQPYHYEIGSGLPQQMHATNTILTNPIDPNSNISTPVGMHLCTLPYTYQPFSSVEKIETPPNNSKNQTYRRSSRGSNKTRKSISHSKNTDKHVGNELPQDIPSWLRSLRLHKYTNNLKDTDWDALVSLSDLDLQNRGIMALGARRKLLKSFQEVAPLVSSKKMNENLKAAKNQSSESLTSFKGHTDSEDLPSGSMSNEISSNSTKQDVSSSSMD</sequence>
<proteinExistence type="evidence at protein level"/>
<gene>
    <name type="ORF">SPBC13E7.03c</name>
</gene>
<evidence type="ECO:0000250" key="1">
    <source>
        <dbReference type="UniProtKB" id="J9VVN9"/>
    </source>
</evidence>
<evidence type="ECO:0000250" key="2">
    <source>
        <dbReference type="UniProtKB" id="Q08831"/>
    </source>
</evidence>
<evidence type="ECO:0000255" key="3">
    <source>
        <dbReference type="PROSITE-ProRule" id="PRU00184"/>
    </source>
</evidence>
<evidence type="ECO:0000256" key="4">
    <source>
        <dbReference type="SAM" id="MobiDB-lite"/>
    </source>
</evidence>
<evidence type="ECO:0000269" key="5">
    <source>
    </source>
</evidence>
<evidence type="ECO:0000305" key="6"/>
<keyword id="KW-0963">Cytoplasm</keyword>
<keyword id="KW-0547">Nucleotide-binding</keyword>
<keyword id="KW-0597">Phosphoprotein</keyword>
<keyword id="KW-0653">Protein transport</keyword>
<keyword id="KW-1185">Reference proteome</keyword>
<keyword id="KW-0694">RNA-binding</keyword>
<keyword id="KW-0813">Transport</keyword>
<feature type="chain" id="PRO_0000081455" description="RNA-binding protein vts1">
    <location>
        <begin position="1"/>
        <end position="713"/>
    </location>
</feature>
<feature type="domain" description="SAM" evidence="3">
    <location>
        <begin position="595"/>
        <end position="656"/>
    </location>
</feature>
<feature type="region of interest" description="Disordered" evidence="4">
    <location>
        <begin position="154"/>
        <end position="208"/>
    </location>
</feature>
<feature type="region of interest" description="Disordered" evidence="4">
    <location>
        <begin position="254"/>
        <end position="336"/>
    </location>
</feature>
<feature type="region of interest" description="Disordered" evidence="4">
    <location>
        <begin position="356"/>
        <end position="389"/>
    </location>
</feature>
<feature type="region of interest" description="Disordered" evidence="4">
    <location>
        <begin position="554"/>
        <end position="596"/>
    </location>
</feature>
<feature type="region of interest" description="Disordered" evidence="4">
    <location>
        <begin position="667"/>
        <end position="713"/>
    </location>
</feature>
<feature type="compositionally biased region" description="Low complexity" evidence="4">
    <location>
        <begin position="154"/>
        <end position="188"/>
    </location>
</feature>
<feature type="compositionally biased region" description="Polar residues" evidence="4">
    <location>
        <begin position="189"/>
        <end position="208"/>
    </location>
</feature>
<feature type="compositionally biased region" description="Polar residues" evidence="4">
    <location>
        <begin position="258"/>
        <end position="281"/>
    </location>
</feature>
<feature type="compositionally biased region" description="Low complexity" evidence="4">
    <location>
        <begin position="282"/>
        <end position="297"/>
    </location>
</feature>
<feature type="compositionally biased region" description="Low complexity" evidence="4">
    <location>
        <begin position="304"/>
        <end position="320"/>
    </location>
</feature>
<feature type="compositionally biased region" description="Polar residues" evidence="4">
    <location>
        <begin position="321"/>
        <end position="330"/>
    </location>
</feature>
<feature type="compositionally biased region" description="Pro residues" evidence="4">
    <location>
        <begin position="369"/>
        <end position="378"/>
    </location>
</feature>
<feature type="compositionally biased region" description="Polar residues" evidence="4">
    <location>
        <begin position="559"/>
        <end position="569"/>
    </location>
</feature>
<feature type="compositionally biased region" description="Basic residues" evidence="4">
    <location>
        <begin position="570"/>
        <end position="583"/>
    </location>
</feature>
<feature type="compositionally biased region" description="Polar residues" evidence="4">
    <location>
        <begin position="670"/>
        <end position="681"/>
    </location>
</feature>
<feature type="compositionally biased region" description="Low complexity" evidence="4">
    <location>
        <begin position="691"/>
        <end position="702"/>
    </location>
</feature>
<feature type="compositionally biased region" description="Polar residues" evidence="4">
    <location>
        <begin position="703"/>
        <end position="713"/>
    </location>
</feature>
<feature type="modified residue" description="Phosphoserine" evidence="5">
    <location>
        <position position="673"/>
    </location>
</feature>
<name>VTS1_SCHPO</name>
<accession>Q9P6R7</accession>